<name>YIDD_PROMI</name>
<dbReference type="EMBL" id="M58352">
    <property type="protein sequence ID" value="AAA83955.1"/>
    <property type="molecule type" value="Genomic_DNA"/>
</dbReference>
<dbReference type="PIR" id="JQ0730">
    <property type="entry name" value="JQ0730"/>
</dbReference>
<dbReference type="RefSeq" id="WP_012368639.1">
    <property type="nucleotide sequence ID" value="NZ_WURR01000008.1"/>
</dbReference>
<dbReference type="GeneID" id="93396132"/>
<dbReference type="PATRIC" id="fig|584.106.peg.3581"/>
<dbReference type="OMA" id="FHPGGHD"/>
<dbReference type="OrthoDB" id="9801753at2"/>
<dbReference type="GO" id="GO:0005886">
    <property type="term" value="C:plasma membrane"/>
    <property type="evidence" value="ECO:0007669"/>
    <property type="project" value="UniProtKB-SubCell"/>
</dbReference>
<dbReference type="HAMAP" id="MF_00386">
    <property type="entry name" value="UPF0161_YidD"/>
    <property type="match status" value="1"/>
</dbReference>
<dbReference type="InterPro" id="IPR002696">
    <property type="entry name" value="Membr_insert_effic_factor_YidD"/>
</dbReference>
<dbReference type="NCBIfam" id="TIGR00278">
    <property type="entry name" value="membrane protein insertion efficiency factor YidD"/>
    <property type="match status" value="1"/>
</dbReference>
<dbReference type="PANTHER" id="PTHR33383">
    <property type="entry name" value="MEMBRANE PROTEIN INSERTION EFFICIENCY FACTOR-RELATED"/>
    <property type="match status" value="1"/>
</dbReference>
<dbReference type="PANTHER" id="PTHR33383:SF1">
    <property type="entry name" value="MEMBRANE PROTEIN INSERTION EFFICIENCY FACTOR-RELATED"/>
    <property type="match status" value="1"/>
</dbReference>
<dbReference type="Pfam" id="PF01809">
    <property type="entry name" value="YidD"/>
    <property type="match status" value="1"/>
</dbReference>
<dbReference type="SMART" id="SM01234">
    <property type="entry name" value="Haemolytic"/>
    <property type="match status" value="1"/>
</dbReference>
<reference key="1">
    <citation type="journal article" date="1990" name="Gene">
        <title>Nucleotide sequence of a Proteus mirabilis DNA fragment homologous to the 60K-rnpA-rpmH-dnaA-dnaN-recF-gyrB region of Escherichia coli.</title>
        <authorList>
            <person name="Skovgaard O."/>
        </authorList>
    </citation>
    <scope>NUCLEOTIDE SEQUENCE [GENOMIC DNA]</scope>
    <source>
        <strain>LM1509</strain>
    </source>
</reference>
<proteinExistence type="inferred from homology"/>
<accession>P22834</accession>
<sequence>MASSLSLGSKILILLIRGYQLGISPLLGPRCRFNPTCSHYGIEALRRFGMIKGSWLTVKRILKCHPLHEGGDDPVPPRKNDDNREN</sequence>
<feature type="chain" id="PRO_0000171851" description="Putative membrane protein insertion efficiency factor">
    <location>
        <begin position="1"/>
        <end position="86"/>
    </location>
</feature>
<feature type="region of interest" description="Disordered" evidence="2">
    <location>
        <begin position="66"/>
        <end position="86"/>
    </location>
</feature>
<comment type="function">
    <text evidence="1">Could be involved in insertion of integral membrane proteins into the membrane.</text>
</comment>
<comment type="subcellular location">
    <subcellularLocation>
        <location evidence="1">Cell membrane</location>
        <topology evidence="1">Peripheral membrane protein</topology>
        <orientation evidence="1">Cytoplasmic side</orientation>
    </subcellularLocation>
</comment>
<comment type="similarity">
    <text evidence="1">Belongs to the UPF0161 family.</text>
</comment>
<organism>
    <name type="scientific">Proteus mirabilis</name>
    <dbReference type="NCBI Taxonomy" id="584"/>
    <lineage>
        <taxon>Bacteria</taxon>
        <taxon>Pseudomonadati</taxon>
        <taxon>Pseudomonadota</taxon>
        <taxon>Gammaproteobacteria</taxon>
        <taxon>Enterobacterales</taxon>
        <taxon>Morganellaceae</taxon>
        <taxon>Proteus</taxon>
    </lineage>
</organism>
<keyword id="KW-1003">Cell membrane</keyword>
<keyword id="KW-0472">Membrane</keyword>
<evidence type="ECO:0000255" key="1">
    <source>
        <dbReference type="HAMAP-Rule" id="MF_00386"/>
    </source>
</evidence>
<evidence type="ECO:0000256" key="2">
    <source>
        <dbReference type="SAM" id="MobiDB-lite"/>
    </source>
</evidence>
<protein>
    <recommendedName>
        <fullName evidence="1">Putative membrane protein insertion efficiency factor</fullName>
    </recommendedName>
</protein>